<protein>
    <recommendedName>
        <fullName evidence="1">Nucleotide-binding protein FRAAL4592</fullName>
    </recommendedName>
</protein>
<sequence>MTTPTLDLAIITGLSGAGRSTAAKCLEDLGWFVVDNLPPALLSTMAELGHRSGGAVSRIGVVVDVRGRAFFSDLRAAIAALDARGMHPRMLFLEASDDALIRRFDHVRRPHPLQGDERVVDGIGRERALLAELRGEADLVLDTTDLNVHELRSKIDAAFGQPGANRLNATVVSFGYKYGLPLDADLVADCRFLPNPHWVEELRPYTGRDPQVRSYVLAQPGAQEFLDQYAALLRLVGEGYAREGKRYLTLAVGCTGGKHRSVAMAEQLGARLAADGVGVRVVHRDLGRE</sequence>
<comment type="function">
    <text evidence="1">Displays ATPase and GTPase activities.</text>
</comment>
<comment type="similarity">
    <text evidence="1">Belongs to the RapZ-like family.</text>
</comment>
<dbReference type="EMBL" id="CT573213">
    <property type="protein sequence ID" value="CAJ63234.1"/>
    <property type="molecule type" value="Genomic_DNA"/>
</dbReference>
<dbReference type="RefSeq" id="WP_011605708.1">
    <property type="nucleotide sequence ID" value="NC_008278.1"/>
</dbReference>
<dbReference type="SMR" id="Q0RH01"/>
<dbReference type="STRING" id="326424.FRAAL4592"/>
<dbReference type="KEGG" id="fal:FRAAL4592"/>
<dbReference type="eggNOG" id="COG1660">
    <property type="taxonomic scope" value="Bacteria"/>
</dbReference>
<dbReference type="HOGENOM" id="CLU_059558_0_0_11"/>
<dbReference type="OrthoDB" id="9784461at2"/>
<dbReference type="Proteomes" id="UP000000657">
    <property type="component" value="Chromosome"/>
</dbReference>
<dbReference type="GO" id="GO:0005524">
    <property type="term" value="F:ATP binding"/>
    <property type="evidence" value="ECO:0007669"/>
    <property type="project" value="UniProtKB-UniRule"/>
</dbReference>
<dbReference type="GO" id="GO:0005525">
    <property type="term" value="F:GTP binding"/>
    <property type="evidence" value="ECO:0007669"/>
    <property type="project" value="UniProtKB-UniRule"/>
</dbReference>
<dbReference type="Gene3D" id="3.40.50.300">
    <property type="entry name" value="P-loop containing nucleotide triphosphate hydrolases"/>
    <property type="match status" value="1"/>
</dbReference>
<dbReference type="HAMAP" id="MF_00636">
    <property type="entry name" value="RapZ_like"/>
    <property type="match status" value="1"/>
</dbReference>
<dbReference type="InterPro" id="IPR027417">
    <property type="entry name" value="P-loop_NTPase"/>
</dbReference>
<dbReference type="InterPro" id="IPR005337">
    <property type="entry name" value="RapZ-like"/>
</dbReference>
<dbReference type="InterPro" id="IPR053930">
    <property type="entry name" value="RapZ-like_N"/>
</dbReference>
<dbReference type="InterPro" id="IPR053931">
    <property type="entry name" value="RapZ_C"/>
</dbReference>
<dbReference type="NCBIfam" id="NF003828">
    <property type="entry name" value="PRK05416.1"/>
    <property type="match status" value="1"/>
</dbReference>
<dbReference type="PANTHER" id="PTHR30448">
    <property type="entry name" value="RNASE ADAPTER PROTEIN RAPZ"/>
    <property type="match status" value="1"/>
</dbReference>
<dbReference type="PANTHER" id="PTHR30448:SF0">
    <property type="entry name" value="RNASE ADAPTER PROTEIN RAPZ"/>
    <property type="match status" value="1"/>
</dbReference>
<dbReference type="Pfam" id="PF22740">
    <property type="entry name" value="PapZ_C"/>
    <property type="match status" value="1"/>
</dbReference>
<dbReference type="Pfam" id="PF03668">
    <property type="entry name" value="RapZ-like_N"/>
    <property type="match status" value="1"/>
</dbReference>
<dbReference type="PIRSF" id="PIRSF005052">
    <property type="entry name" value="P-loopkin"/>
    <property type="match status" value="1"/>
</dbReference>
<dbReference type="SUPFAM" id="SSF52540">
    <property type="entry name" value="P-loop containing nucleoside triphosphate hydrolases"/>
    <property type="match status" value="1"/>
</dbReference>
<proteinExistence type="inferred from homology"/>
<keyword id="KW-0067">ATP-binding</keyword>
<keyword id="KW-0342">GTP-binding</keyword>
<keyword id="KW-0547">Nucleotide-binding</keyword>
<keyword id="KW-1185">Reference proteome</keyword>
<gene>
    <name type="ordered locus">FRAAL4592</name>
</gene>
<name>Y4592_FRAAA</name>
<accession>Q0RH01</accession>
<organism>
    <name type="scientific">Frankia alni (strain DSM 45986 / CECT 9034 / ACN14a)</name>
    <dbReference type="NCBI Taxonomy" id="326424"/>
    <lineage>
        <taxon>Bacteria</taxon>
        <taxon>Bacillati</taxon>
        <taxon>Actinomycetota</taxon>
        <taxon>Actinomycetes</taxon>
        <taxon>Frankiales</taxon>
        <taxon>Frankiaceae</taxon>
        <taxon>Frankia</taxon>
    </lineage>
</organism>
<feature type="chain" id="PRO_1000056822" description="Nucleotide-binding protein FRAAL4592">
    <location>
        <begin position="1"/>
        <end position="289"/>
    </location>
</feature>
<feature type="binding site" evidence="1">
    <location>
        <begin position="13"/>
        <end position="20"/>
    </location>
    <ligand>
        <name>ATP</name>
        <dbReference type="ChEBI" id="CHEBI:30616"/>
    </ligand>
</feature>
<feature type="binding site" evidence="1">
    <location>
        <begin position="64"/>
        <end position="67"/>
    </location>
    <ligand>
        <name>GTP</name>
        <dbReference type="ChEBI" id="CHEBI:37565"/>
    </ligand>
</feature>
<evidence type="ECO:0000255" key="1">
    <source>
        <dbReference type="HAMAP-Rule" id="MF_00636"/>
    </source>
</evidence>
<reference key="1">
    <citation type="journal article" date="2007" name="Genome Res.">
        <title>Genome characteristics of facultatively symbiotic Frankia sp. strains reflect host range and host plant biogeography.</title>
        <authorList>
            <person name="Normand P."/>
            <person name="Lapierre P."/>
            <person name="Tisa L.S."/>
            <person name="Gogarten J.P."/>
            <person name="Alloisio N."/>
            <person name="Bagnarol E."/>
            <person name="Bassi C.A."/>
            <person name="Berry A.M."/>
            <person name="Bickhart D.M."/>
            <person name="Choisne N."/>
            <person name="Couloux A."/>
            <person name="Cournoyer B."/>
            <person name="Cruveiller S."/>
            <person name="Daubin V."/>
            <person name="Demange N."/>
            <person name="Francino M.P."/>
            <person name="Goltsman E."/>
            <person name="Huang Y."/>
            <person name="Kopp O.R."/>
            <person name="Labarre L."/>
            <person name="Lapidus A."/>
            <person name="Lavire C."/>
            <person name="Marechal J."/>
            <person name="Martinez M."/>
            <person name="Mastronunzio J.E."/>
            <person name="Mullin B.C."/>
            <person name="Niemann J."/>
            <person name="Pujic P."/>
            <person name="Rawnsley T."/>
            <person name="Rouy Z."/>
            <person name="Schenowitz C."/>
            <person name="Sellstedt A."/>
            <person name="Tavares F."/>
            <person name="Tomkins J.P."/>
            <person name="Vallenet D."/>
            <person name="Valverde C."/>
            <person name="Wall L.G."/>
            <person name="Wang Y."/>
            <person name="Medigue C."/>
            <person name="Benson D.R."/>
        </authorList>
    </citation>
    <scope>NUCLEOTIDE SEQUENCE [LARGE SCALE GENOMIC DNA]</scope>
    <source>
        <strain>DSM 45986 / CECT 9034 / ACN14a</strain>
    </source>
</reference>